<keyword id="KW-0687">Ribonucleoprotein</keyword>
<keyword id="KW-0689">Ribosomal protein</keyword>
<keyword id="KW-0694">RNA-binding</keyword>
<keyword id="KW-0699">rRNA-binding</keyword>
<proteinExistence type="inferred from homology"/>
<accession>B1W3Y1</accession>
<dbReference type="EMBL" id="AP009493">
    <property type="protein sequence ID" value="BAG19637.1"/>
    <property type="molecule type" value="Genomic_DNA"/>
</dbReference>
<dbReference type="RefSeq" id="WP_003956432.1">
    <property type="nucleotide sequence ID" value="NC_010572.1"/>
</dbReference>
<dbReference type="SMR" id="B1W3Y1"/>
<dbReference type="GeneID" id="97760396"/>
<dbReference type="KEGG" id="sgr:SGR_2808"/>
<dbReference type="eggNOG" id="COG0100">
    <property type="taxonomic scope" value="Bacteria"/>
</dbReference>
<dbReference type="HOGENOM" id="CLU_072439_5_0_11"/>
<dbReference type="Proteomes" id="UP000001685">
    <property type="component" value="Chromosome"/>
</dbReference>
<dbReference type="GO" id="GO:1990904">
    <property type="term" value="C:ribonucleoprotein complex"/>
    <property type="evidence" value="ECO:0007669"/>
    <property type="project" value="UniProtKB-KW"/>
</dbReference>
<dbReference type="GO" id="GO:0005840">
    <property type="term" value="C:ribosome"/>
    <property type="evidence" value="ECO:0007669"/>
    <property type="project" value="UniProtKB-KW"/>
</dbReference>
<dbReference type="GO" id="GO:0019843">
    <property type="term" value="F:rRNA binding"/>
    <property type="evidence" value="ECO:0007669"/>
    <property type="project" value="UniProtKB-UniRule"/>
</dbReference>
<dbReference type="GO" id="GO:0003735">
    <property type="term" value="F:structural constituent of ribosome"/>
    <property type="evidence" value="ECO:0007669"/>
    <property type="project" value="InterPro"/>
</dbReference>
<dbReference type="GO" id="GO:0006412">
    <property type="term" value="P:translation"/>
    <property type="evidence" value="ECO:0007669"/>
    <property type="project" value="UniProtKB-UniRule"/>
</dbReference>
<dbReference type="FunFam" id="3.30.420.80:FF:000001">
    <property type="entry name" value="30S ribosomal protein S11"/>
    <property type="match status" value="1"/>
</dbReference>
<dbReference type="Gene3D" id="3.30.420.80">
    <property type="entry name" value="Ribosomal protein S11"/>
    <property type="match status" value="1"/>
</dbReference>
<dbReference type="HAMAP" id="MF_01310">
    <property type="entry name" value="Ribosomal_uS11"/>
    <property type="match status" value="1"/>
</dbReference>
<dbReference type="InterPro" id="IPR001971">
    <property type="entry name" value="Ribosomal_uS11"/>
</dbReference>
<dbReference type="InterPro" id="IPR019981">
    <property type="entry name" value="Ribosomal_uS11_bac-type"/>
</dbReference>
<dbReference type="InterPro" id="IPR018102">
    <property type="entry name" value="Ribosomal_uS11_CS"/>
</dbReference>
<dbReference type="InterPro" id="IPR036967">
    <property type="entry name" value="Ribosomal_uS11_sf"/>
</dbReference>
<dbReference type="NCBIfam" id="NF003698">
    <property type="entry name" value="PRK05309.1"/>
    <property type="match status" value="1"/>
</dbReference>
<dbReference type="NCBIfam" id="TIGR03632">
    <property type="entry name" value="uS11_bact"/>
    <property type="match status" value="1"/>
</dbReference>
<dbReference type="PANTHER" id="PTHR11759">
    <property type="entry name" value="40S RIBOSOMAL PROTEIN S14/30S RIBOSOMAL PROTEIN S11"/>
    <property type="match status" value="1"/>
</dbReference>
<dbReference type="Pfam" id="PF00411">
    <property type="entry name" value="Ribosomal_S11"/>
    <property type="match status" value="1"/>
</dbReference>
<dbReference type="PIRSF" id="PIRSF002131">
    <property type="entry name" value="Ribosomal_S11"/>
    <property type="match status" value="1"/>
</dbReference>
<dbReference type="SUPFAM" id="SSF53137">
    <property type="entry name" value="Translational machinery components"/>
    <property type="match status" value="1"/>
</dbReference>
<dbReference type="PROSITE" id="PS00054">
    <property type="entry name" value="RIBOSOMAL_S11"/>
    <property type="match status" value="1"/>
</dbReference>
<feature type="chain" id="PRO_1000141143" description="Small ribosomal subunit protein uS11">
    <location>
        <begin position="1"/>
        <end position="134"/>
    </location>
</feature>
<feature type="region of interest" description="Disordered" evidence="2">
    <location>
        <begin position="1"/>
        <end position="22"/>
    </location>
</feature>
<feature type="region of interest" description="Disordered" evidence="2">
    <location>
        <begin position="114"/>
        <end position="134"/>
    </location>
</feature>
<feature type="compositionally biased region" description="Basic residues" evidence="2">
    <location>
        <begin position="9"/>
        <end position="22"/>
    </location>
</feature>
<comment type="function">
    <text evidence="1">Located on the platform of the 30S subunit, it bridges several disparate RNA helices of the 16S rRNA. Forms part of the Shine-Dalgarno cleft in the 70S ribosome.</text>
</comment>
<comment type="subunit">
    <text evidence="1">Part of the 30S ribosomal subunit. Interacts with proteins S7 and S18. Binds to IF-3.</text>
</comment>
<comment type="similarity">
    <text evidence="1">Belongs to the universal ribosomal protein uS11 family.</text>
</comment>
<evidence type="ECO:0000255" key="1">
    <source>
        <dbReference type="HAMAP-Rule" id="MF_01310"/>
    </source>
</evidence>
<evidence type="ECO:0000256" key="2">
    <source>
        <dbReference type="SAM" id="MobiDB-lite"/>
    </source>
</evidence>
<evidence type="ECO:0000305" key="3"/>
<organism>
    <name type="scientific">Streptomyces griseus subsp. griseus (strain JCM 4626 / CBS 651.72 / NBRC 13350 / KCC S-0626 / ISP 5235)</name>
    <dbReference type="NCBI Taxonomy" id="455632"/>
    <lineage>
        <taxon>Bacteria</taxon>
        <taxon>Bacillati</taxon>
        <taxon>Actinomycetota</taxon>
        <taxon>Actinomycetes</taxon>
        <taxon>Kitasatosporales</taxon>
        <taxon>Streptomycetaceae</taxon>
        <taxon>Streptomyces</taxon>
    </lineage>
</organism>
<sequence length="134" mass="14384">MPPKGRQGAAKKVRRKEKKNVAHGHAHIKSTFNNTIVSITDPSGNVISWASAGHVGFKGSRKSTPFAAQMAAESAARRAQEHGMRKVDVFVKGPGSGRETAIRSLQATGLEVGSIQDVTPTPHNGCRPPKRRRV</sequence>
<name>RS11_STRGG</name>
<reference key="1">
    <citation type="journal article" date="2008" name="J. Bacteriol.">
        <title>Genome sequence of the streptomycin-producing microorganism Streptomyces griseus IFO 13350.</title>
        <authorList>
            <person name="Ohnishi Y."/>
            <person name="Ishikawa J."/>
            <person name="Hara H."/>
            <person name="Suzuki H."/>
            <person name="Ikenoya M."/>
            <person name="Ikeda H."/>
            <person name="Yamashita A."/>
            <person name="Hattori M."/>
            <person name="Horinouchi S."/>
        </authorList>
    </citation>
    <scope>NUCLEOTIDE SEQUENCE [LARGE SCALE GENOMIC DNA]</scope>
    <source>
        <strain>JCM 4626 / CBS 651.72 / NBRC 13350 / KCC S-0626 / ISP 5235</strain>
    </source>
</reference>
<protein>
    <recommendedName>
        <fullName evidence="1">Small ribosomal subunit protein uS11</fullName>
    </recommendedName>
    <alternativeName>
        <fullName evidence="3">30S ribosomal protein S11</fullName>
    </alternativeName>
</protein>
<gene>
    <name evidence="1" type="primary">rpsK</name>
    <name type="ordered locus">SGR_2808</name>
</gene>